<feature type="chain" id="PRO_0000097189" description="Ran-binding protein 1 homolog c">
    <location>
        <begin position="1"/>
        <end position="219"/>
    </location>
</feature>
<feature type="domain" description="RanBD1" evidence="2">
    <location>
        <begin position="26"/>
        <end position="161"/>
    </location>
</feature>
<feature type="region of interest" description="Disordered" evidence="3">
    <location>
        <begin position="1"/>
        <end position="30"/>
    </location>
</feature>
<feature type="region of interest" description="Disordered" evidence="3">
    <location>
        <begin position="160"/>
        <end position="219"/>
    </location>
</feature>
<feature type="compositionally biased region" description="Basic and acidic residues" evidence="3">
    <location>
        <begin position="1"/>
        <end position="11"/>
    </location>
</feature>
<feature type="compositionally biased region" description="Acidic residues" evidence="3">
    <location>
        <begin position="12"/>
        <end position="23"/>
    </location>
</feature>
<feature type="compositionally biased region" description="Basic and acidic residues" evidence="3">
    <location>
        <begin position="185"/>
        <end position="219"/>
    </location>
</feature>
<proteinExistence type="evidence at transcript level"/>
<dbReference type="EMBL" id="U62742">
    <property type="protein sequence ID" value="AAB38776.1"/>
    <property type="molecule type" value="mRNA"/>
</dbReference>
<dbReference type="EMBL" id="AB020755">
    <property type="protein sequence ID" value="BAA97328.1"/>
    <property type="status" value="ALT_SEQ"/>
    <property type="molecule type" value="Genomic_DNA"/>
</dbReference>
<dbReference type="EMBL" id="CP002688">
    <property type="protein sequence ID" value="AED97073.1"/>
    <property type="molecule type" value="Genomic_DNA"/>
</dbReference>
<dbReference type="RefSeq" id="NP_200667.2">
    <property type="nucleotide sequence ID" value="NM_125246.4"/>
</dbReference>
<dbReference type="SMR" id="P92985"/>
<dbReference type="BioGRID" id="21217">
    <property type="interactions" value="5"/>
</dbReference>
<dbReference type="FunCoup" id="P92985">
    <property type="interactions" value="3870"/>
</dbReference>
<dbReference type="STRING" id="3702.P92985"/>
<dbReference type="iPTMnet" id="P92985"/>
<dbReference type="PaxDb" id="3702-AT5G58590.1"/>
<dbReference type="ProteomicsDB" id="225947"/>
<dbReference type="EnsemblPlants" id="AT5G58590.1">
    <property type="protein sequence ID" value="AT5G58590.1"/>
    <property type="gene ID" value="AT5G58590"/>
</dbReference>
<dbReference type="GeneID" id="835973"/>
<dbReference type="Gramene" id="AT5G58590.1">
    <property type="protein sequence ID" value="AT5G58590.1"/>
    <property type="gene ID" value="AT5G58590"/>
</dbReference>
<dbReference type="KEGG" id="ath:AT5G58590"/>
<dbReference type="Araport" id="AT5G58590"/>
<dbReference type="TAIR" id="AT5G58590">
    <property type="gene designation" value="RANBP1"/>
</dbReference>
<dbReference type="eggNOG" id="KOG0864">
    <property type="taxonomic scope" value="Eukaryota"/>
</dbReference>
<dbReference type="HOGENOM" id="CLU_067861_1_0_1"/>
<dbReference type="InParanoid" id="P92985"/>
<dbReference type="OMA" id="NVIWQDT"/>
<dbReference type="PhylomeDB" id="P92985"/>
<dbReference type="CD-CODE" id="4299E36E">
    <property type="entry name" value="Nucleolus"/>
</dbReference>
<dbReference type="PRO" id="PR:P92985"/>
<dbReference type="Proteomes" id="UP000006548">
    <property type="component" value="Chromosome 5"/>
</dbReference>
<dbReference type="ExpressionAtlas" id="P92985">
    <property type="expression patterns" value="baseline and differential"/>
</dbReference>
<dbReference type="GO" id="GO:0005829">
    <property type="term" value="C:cytosol"/>
    <property type="evidence" value="ECO:0007005"/>
    <property type="project" value="TAIR"/>
</dbReference>
<dbReference type="GO" id="GO:0005643">
    <property type="term" value="C:nuclear pore"/>
    <property type="evidence" value="ECO:0007669"/>
    <property type="project" value="UniProtKB-SubCell"/>
</dbReference>
<dbReference type="GO" id="GO:0009536">
    <property type="term" value="C:plastid"/>
    <property type="evidence" value="ECO:0007005"/>
    <property type="project" value="TAIR"/>
</dbReference>
<dbReference type="GO" id="GO:0051028">
    <property type="term" value="P:mRNA transport"/>
    <property type="evidence" value="ECO:0007669"/>
    <property type="project" value="UniProtKB-KW"/>
</dbReference>
<dbReference type="GO" id="GO:0006606">
    <property type="term" value="P:protein import into nucleus"/>
    <property type="evidence" value="ECO:0000304"/>
    <property type="project" value="TAIR"/>
</dbReference>
<dbReference type="CDD" id="cd13179">
    <property type="entry name" value="RanBD_RanBP1"/>
    <property type="match status" value="1"/>
</dbReference>
<dbReference type="FunFam" id="2.30.29.30:FF:000245">
    <property type="entry name" value="Ran-binding protein 1 b"/>
    <property type="match status" value="1"/>
</dbReference>
<dbReference type="Gene3D" id="2.30.29.30">
    <property type="entry name" value="Pleckstrin-homology domain (PH domain)/Phosphotyrosine-binding domain (PTB)"/>
    <property type="match status" value="1"/>
</dbReference>
<dbReference type="InterPro" id="IPR011993">
    <property type="entry name" value="PH-like_dom_sf"/>
</dbReference>
<dbReference type="InterPro" id="IPR000156">
    <property type="entry name" value="Ran_bind_dom"/>
</dbReference>
<dbReference type="InterPro" id="IPR045255">
    <property type="entry name" value="RanBP1-like"/>
</dbReference>
<dbReference type="InterPro" id="IPR045256">
    <property type="entry name" value="RanBP1_RanBD"/>
</dbReference>
<dbReference type="PANTHER" id="PTHR23138:SF87">
    <property type="entry name" value="E3 SUMO-PROTEIN LIGASE RANBP2"/>
    <property type="match status" value="1"/>
</dbReference>
<dbReference type="PANTHER" id="PTHR23138">
    <property type="entry name" value="RAN BINDING PROTEIN"/>
    <property type="match status" value="1"/>
</dbReference>
<dbReference type="Pfam" id="PF00638">
    <property type="entry name" value="Ran_BP1"/>
    <property type="match status" value="1"/>
</dbReference>
<dbReference type="SMART" id="SM00160">
    <property type="entry name" value="RanBD"/>
    <property type="match status" value="1"/>
</dbReference>
<dbReference type="SUPFAM" id="SSF50729">
    <property type="entry name" value="PH domain-like"/>
    <property type="match status" value="1"/>
</dbReference>
<dbReference type="PROSITE" id="PS50196">
    <property type="entry name" value="RANBD1"/>
    <property type="match status" value="1"/>
</dbReference>
<gene>
    <name type="primary">RANBP1C</name>
    <name type="synonym">RANBP1</name>
    <name type="ordered locus">At5g58590</name>
    <name type="ORF">MZN1.4</name>
</gene>
<reference key="1">
    <citation type="journal article" date="1996" name="Plant J.">
        <title>Identification of plant cytoskeletal, cell cycle-related and polarity-related proteins using Schizosaccharomyces pombe.</title>
        <authorList>
            <person name="Xia G."/>
            <person name="Ramachandran S."/>
            <person name="Hong Y."/>
            <person name="Chan Y.-S."/>
            <person name="Simanis V."/>
            <person name="Chua N.-H."/>
        </authorList>
    </citation>
    <scope>NUCLEOTIDE SEQUENCE [MRNA]</scope>
</reference>
<reference key="2">
    <citation type="journal article" date="2000" name="DNA Res.">
        <title>Structural analysis of Arabidopsis thaliana chromosome 5. X. Sequence features of the regions of 3,076,755 bp covered by sixty P1 and TAC clones.</title>
        <authorList>
            <person name="Sato S."/>
            <person name="Nakamura Y."/>
            <person name="Kaneko T."/>
            <person name="Katoh T."/>
            <person name="Asamizu E."/>
            <person name="Kotani H."/>
            <person name="Tabata S."/>
        </authorList>
    </citation>
    <scope>NUCLEOTIDE SEQUENCE [LARGE SCALE GENOMIC DNA]</scope>
    <source>
        <strain>cv. Columbia</strain>
    </source>
</reference>
<reference key="3">
    <citation type="journal article" date="2017" name="Plant J.">
        <title>Araport11: a complete reannotation of the Arabidopsis thaliana reference genome.</title>
        <authorList>
            <person name="Cheng C.Y."/>
            <person name="Krishnakumar V."/>
            <person name="Chan A.P."/>
            <person name="Thibaud-Nissen F."/>
            <person name="Schobel S."/>
            <person name="Town C.D."/>
        </authorList>
    </citation>
    <scope>GENOME REANNOTATION</scope>
    <source>
        <strain>cv. Columbia</strain>
    </source>
</reference>
<accession>P92985</accession>
<accession>Q9LUZ8</accession>
<comment type="subcellular location">
    <subcellularLocation>
        <location evidence="1">Nucleus</location>
        <location evidence="1">Nuclear pore complex</location>
    </subcellularLocation>
</comment>
<comment type="sequence caution" evidence="4">
    <conflict type="erroneous gene model prediction">
        <sequence resource="EMBL-CDS" id="BAA97328"/>
    </conflict>
</comment>
<sequence length="219" mass="24722">MASTEPERENREDETEVNEDEDTGAQVAPIVRLEEVAVTTGEEDEDAVLDLKSKMYRFDKEGNQWKERGAGTVKLLKHKETGKVRLVMRQSKTLKICANHLISSGMSVQEHSGNEKSCLWHATDFSDGELKDELFCIRFASIENCKTFMEKFTEIAESQQVGKESTQGDEAAGLIENLSVEENISEEKAKEAEEKEPAKEDKETKKEKVEEEKKTEAST</sequence>
<keyword id="KW-0509">mRNA transport</keyword>
<keyword id="KW-0906">Nuclear pore complex</keyword>
<keyword id="KW-0539">Nucleus</keyword>
<keyword id="KW-0653">Protein transport</keyword>
<keyword id="KW-1185">Reference proteome</keyword>
<keyword id="KW-0811">Translocation</keyword>
<keyword id="KW-0813">Transport</keyword>
<protein>
    <recommendedName>
        <fullName>Ran-binding protein 1 homolog c</fullName>
    </recommendedName>
</protein>
<evidence type="ECO:0000250" key="1"/>
<evidence type="ECO:0000255" key="2">
    <source>
        <dbReference type="PROSITE-ProRule" id="PRU00164"/>
    </source>
</evidence>
<evidence type="ECO:0000256" key="3">
    <source>
        <dbReference type="SAM" id="MobiDB-lite"/>
    </source>
</evidence>
<evidence type="ECO:0000305" key="4"/>
<organism>
    <name type="scientific">Arabidopsis thaliana</name>
    <name type="common">Mouse-ear cress</name>
    <dbReference type="NCBI Taxonomy" id="3702"/>
    <lineage>
        <taxon>Eukaryota</taxon>
        <taxon>Viridiplantae</taxon>
        <taxon>Streptophyta</taxon>
        <taxon>Embryophyta</taxon>
        <taxon>Tracheophyta</taxon>
        <taxon>Spermatophyta</taxon>
        <taxon>Magnoliopsida</taxon>
        <taxon>eudicotyledons</taxon>
        <taxon>Gunneridae</taxon>
        <taxon>Pentapetalae</taxon>
        <taxon>rosids</taxon>
        <taxon>malvids</taxon>
        <taxon>Brassicales</taxon>
        <taxon>Brassicaceae</taxon>
        <taxon>Camelineae</taxon>
        <taxon>Arabidopsis</taxon>
    </lineage>
</organism>
<name>RBP1C_ARATH</name>